<proteinExistence type="inferred from homology"/>
<feature type="initiator methionine" description="Removed" evidence="1">
    <location>
        <position position="1"/>
    </location>
</feature>
<feature type="chain" id="PRO_0000203596" description="Guanine nucleotide-binding protein subunit alpha">
    <location>
        <begin position="2"/>
        <end position="353"/>
    </location>
</feature>
<feature type="domain" description="G-alpha" evidence="4">
    <location>
        <begin position="32"/>
        <end position="353"/>
    </location>
</feature>
<feature type="region of interest" description="G1 motif" evidence="4">
    <location>
        <begin position="35"/>
        <end position="48"/>
    </location>
</feature>
<feature type="region of interest" description="G2 motif" evidence="4">
    <location>
        <begin position="173"/>
        <end position="181"/>
    </location>
</feature>
<feature type="region of interest" description="G3 motif" evidence="4">
    <location>
        <begin position="196"/>
        <end position="205"/>
    </location>
</feature>
<feature type="region of interest" description="G4 motif" evidence="4">
    <location>
        <begin position="265"/>
        <end position="272"/>
    </location>
</feature>
<feature type="region of interest" description="G5 motif" evidence="4">
    <location>
        <begin position="323"/>
        <end position="328"/>
    </location>
</feature>
<feature type="binding site" evidence="3">
    <location>
        <position position="43"/>
    </location>
    <ligand>
        <name>GTP</name>
        <dbReference type="ChEBI" id="CHEBI:37565"/>
    </ligand>
</feature>
<feature type="binding site" evidence="3">
    <location>
        <position position="44"/>
    </location>
    <ligand>
        <name>GTP</name>
        <dbReference type="ChEBI" id="CHEBI:37565"/>
    </ligand>
</feature>
<feature type="binding site" evidence="3">
    <location>
        <position position="45"/>
    </location>
    <ligand>
        <name>GTP</name>
        <dbReference type="ChEBI" id="CHEBI:37565"/>
    </ligand>
</feature>
<feature type="binding site" evidence="3">
    <location>
        <position position="46"/>
    </location>
    <ligand>
        <name>GTP</name>
        <dbReference type="ChEBI" id="CHEBI:37565"/>
    </ligand>
</feature>
<feature type="binding site" evidence="3">
    <location>
        <position position="47"/>
    </location>
    <ligand>
        <name>GTP</name>
        <dbReference type="ChEBI" id="CHEBI:37565"/>
    </ligand>
</feature>
<feature type="binding site" evidence="3">
    <location>
        <position position="47"/>
    </location>
    <ligand>
        <name>Mg(2+)</name>
        <dbReference type="ChEBI" id="CHEBI:18420"/>
    </ligand>
</feature>
<feature type="binding site" evidence="3">
    <location>
        <position position="48"/>
    </location>
    <ligand>
        <name>GTP</name>
        <dbReference type="ChEBI" id="CHEBI:37565"/>
    </ligand>
</feature>
<feature type="binding site" evidence="3">
    <location>
        <position position="150"/>
    </location>
    <ligand>
        <name>GTP</name>
        <dbReference type="ChEBI" id="CHEBI:37565"/>
    </ligand>
</feature>
<feature type="binding site" evidence="3">
    <location>
        <position position="175"/>
    </location>
    <ligand>
        <name>GTP</name>
        <dbReference type="ChEBI" id="CHEBI:37565"/>
    </ligand>
</feature>
<feature type="binding site" evidence="3">
    <location>
        <position position="181"/>
    </location>
    <ligand>
        <name>GTP</name>
        <dbReference type="ChEBI" id="CHEBI:37565"/>
    </ligand>
</feature>
<feature type="binding site" evidence="3">
    <location>
        <position position="181"/>
    </location>
    <ligand>
        <name>Mg(2+)</name>
        <dbReference type="ChEBI" id="CHEBI:18420"/>
    </ligand>
</feature>
<feature type="binding site" evidence="3">
    <location>
        <position position="203"/>
    </location>
    <ligand>
        <name>GTP</name>
        <dbReference type="ChEBI" id="CHEBI:37565"/>
    </ligand>
</feature>
<feature type="binding site" evidence="3">
    <location>
        <position position="269"/>
    </location>
    <ligand>
        <name>GTP</name>
        <dbReference type="ChEBI" id="CHEBI:37565"/>
    </ligand>
</feature>
<feature type="binding site" evidence="3">
    <location>
        <position position="270"/>
    </location>
    <ligand>
        <name>GTP</name>
        <dbReference type="ChEBI" id="CHEBI:37565"/>
    </ligand>
</feature>
<feature type="binding site" evidence="3">
    <location>
        <position position="272"/>
    </location>
    <ligand>
        <name>GTP</name>
        <dbReference type="ChEBI" id="CHEBI:37565"/>
    </ligand>
</feature>
<feature type="binding site" evidence="3">
    <location>
        <position position="325"/>
    </location>
    <ligand>
        <name>GTP</name>
        <dbReference type="ChEBI" id="CHEBI:37565"/>
    </ligand>
</feature>
<feature type="lipid moiety-binding region" description="N-myristoyl glycine" evidence="2">
    <location>
        <position position="2"/>
    </location>
</feature>
<feature type="lipid moiety-binding region" description="S-palmitoyl cysteine" evidence="2">
    <location>
        <position position="3"/>
    </location>
</feature>
<sequence>MGCGMSTEEKEGKQRNEEIENQLKRDKLMQRNEIKMLLLGAGESGKSTILKQMKLIHEGGYSRDERESFKEIIFSNTVQSMRVILEAMESLELPLDDQRAEYHVQTIFMQPAQIEGDSLPPEVGNAISVLWKDAGVQQCFQRSREYQLNDSAKYYFDSIDRIAAPDYIPNDQDVLRSRVKTTGITETTFIIGDLTYRMFDVGGQRSERKKWIHCFENVTTILFLVAISEYDQLLFEDETVNRMQEALTLFDSICNSRWFVKTSIILFLNKIDRFKEKLPVSPMKNYFPDYEGGPDYAAACDYILNRFVSLNQHETKQIYTHFTCATDTMQIRFVMAAVNDIIIQENLRLCGLI</sequence>
<comment type="function">
    <text>Guanine nucleotide-binding proteins (G proteins) are involved as modulators or transducers in various transmembrane signaling systems. Involved in the mating pathway.</text>
</comment>
<comment type="cofactor">
    <cofactor evidence="3">
        <name>Mg(2+)</name>
        <dbReference type="ChEBI" id="CHEBI:18420"/>
    </cofactor>
</comment>
<comment type="subunit">
    <text>G proteins are composed of 3 units; alpha, beta and gamma. The alpha chain contains the guanine nucleotide binding site.</text>
</comment>
<comment type="similarity">
    <text evidence="5">Belongs to the G-alpha family. G(q) subfamily.</text>
</comment>
<keyword id="KW-0342">GTP-binding</keyword>
<keyword id="KW-0378">Hydrolase</keyword>
<keyword id="KW-0449">Lipoprotein</keyword>
<keyword id="KW-0460">Magnesium</keyword>
<keyword id="KW-0479">Metal-binding</keyword>
<keyword id="KW-0519">Myristate</keyword>
<keyword id="KW-0547">Nucleotide-binding</keyword>
<keyword id="KW-0564">Palmitate</keyword>
<keyword id="KW-0807">Transducer</keyword>
<dbReference type="EMBL" id="AF070446">
    <property type="protein sequence ID" value="AAC23576.1"/>
    <property type="molecule type" value="Genomic_DNA"/>
</dbReference>
<dbReference type="EMBL" id="KB733460">
    <property type="protein sequence ID" value="ENI03377.1"/>
    <property type="molecule type" value="Genomic_DNA"/>
</dbReference>
<dbReference type="RefSeq" id="XP_014077286.1">
    <property type="nucleotide sequence ID" value="XM_014221811.1"/>
</dbReference>
<dbReference type="SMR" id="O74227"/>
<dbReference type="GeneID" id="25838107"/>
<dbReference type="HOGENOM" id="CLU_014184_6_0_1"/>
<dbReference type="OrthoDB" id="5817230at2759"/>
<dbReference type="PHI-base" id="PHI:4237"/>
<dbReference type="Proteomes" id="UP000012338">
    <property type="component" value="Unassembled WGS sequence"/>
</dbReference>
<dbReference type="GO" id="GO:0005737">
    <property type="term" value="C:cytoplasm"/>
    <property type="evidence" value="ECO:0007669"/>
    <property type="project" value="TreeGrafter"/>
</dbReference>
<dbReference type="GO" id="GO:0005834">
    <property type="term" value="C:heterotrimeric G-protein complex"/>
    <property type="evidence" value="ECO:0007669"/>
    <property type="project" value="InterPro"/>
</dbReference>
<dbReference type="GO" id="GO:0001664">
    <property type="term" value="F:G protein-coupled receptor binding"/>
    <property type="evidence" value="ECO:0007669"/>
    <property type="project" value="InterPro"/>
</dbReference>
<dbReference type="GO" id="GO:0031683">
    <property type="term" value="F:G-protein beta/gamma-subunit complex binding"/>
    <property type="evidence" value="ECO:0007669"/>
    <property type="project" value="InterPro"/>
</dbReference>
<dbReference type="GO" id="GO:0005525">
    <property type="term" value="F:GTP binding"/>
    <property type="evidence" value="ECO:0007669"/>
    <property type="project" value="UniProtKB-KW"/>
</dbReference>
<dbReference type="GO" id="GO:0003924">
    <property type="term" value="F:GTPase activity"/>
    <property type="evidence" value="ECO:0007669"/>
    <property type="project" value="InterPro"/>
</dbReference>
<dbReference type="GO" id="GO:0046872">
    <property type="term" value="F:metal ion binding"/>
    <property type="evidence" value="ECO:0007669"/>
    <property type="project" value="UniProtKB-KW"/>
</dbReference>
<dbReference type="GO" id="GO:0007186">
    <property type="term" value="P:G protein-coupled receptor signaling pathway"/>
    <property type="evidence" value="ECO:0007669"/>
    <property type="project" value="InterPro"/>
</dbReference>
<dbReference type="GO" id="GO:0000750">
    <property type="term" value="P:pheromone-dependent signal transduction involved in conjugation with cellular fusion"/>
    <property type="evidence" value="ECO:0007669"/>
    <property type="project" value="TreeGrafter"/>
</dbReference>
<dbReference type="CDD" id="cd00066">
    <property type="entry name" value="G-alpha"/>
    <property type="match status" value="1"/>
</dbReference>
<dbReference type="FunFam" id="1.10.400.10:FF:000001">
    <property type="entry name" value="Guanine nucleotide-binding protein G(I) subunit alpha"/>
    <property type="match status" value="1"/>
</dbReference>
<dbReference type="FunFam" id="3.40.50.300:FF:000051">
    <property type="entry name" value="Guanine nucleotide-binding protein subunit alpha"/>
    <property type="match status" value="1"/>
</dbReference>
<dbReference type="FunFam" id="3.40.50.300:FF:000692">
    <property type="entry name" value="Guanine nucleotide-binding protein subunit alpha"/>
    <property type="match status" value="1"/>
</dbReference>
<dbReference type="Gene3D" id="1.10.400.10">
    <property type="entry name" value="GI Alpha 1, domain 2-like"/>
    <property type="match status" value="1"/>
</dbReference>
<dbReference type="Gene3D" id="3.40.50.300">
    <property type="entry name" value="P-loop containing nucleotide triphosphate hydrolases"/>
    <property type="match status" value="1"/>
</dbReference>
<dbReference type="InterPro" id="IPR002975">
    <property type="entry name" value="Fungi_Gprotein_alpha"/>
</dbReference>
<dbReference type="InterPro" id="IPR001019">
    <property type="entry name" value="Gprotein_alpha_su"/>
</dbReference>
<dbReference type="InterPro" id="IPR011025">
    <property type="entry name" value="GproteinA_insert"/>
</dbReference>
<dbReference type="InterPro" id="IPR027417">
    <property type="entry name" value="P-loop_NTPase"/>
</dbReference>
<dbReference type="PANTHER" id="PTHR10218">
    <property type="entry name" value="GTP-BINDING PROTEIN ALPHA SUBUNIT"/>
    <property type="match status" value="1"/>
</dbReference>
<dbReference type="PANTHER" id="PTHR10218:SF302">
    <property type="entry name" value="GUANINE NUCLEOTIDE-BINDING PROTEIN ALPHA-5 SUBUNIT"/>
    <property type="match status" value="1"/>
</dbReference>
<dbReference type="Pfam" id="PF00503">
    <property type="entry name" value="G-alpha"/>
    <property type="match status" value="1"/>
</dbReference>
<dbReference type="PRINTS" id="PR00318">
    <property type="entry name" value="GPROTEINA"/>
</dbReference>
<dbReference type="PRINTS" id="PR01241">
    <property type="entry name" value="GPROTEINAFNG"/>
</dbReference>
<dbReference type="SMART" id="SM00275">
    <property type="entry name" value="G_alpha"/>
    <property type="match status" value="1"/>
</dbReference>
<dbReference type="SUPFAM" id="SSF52540">
    <property type="entry name" value="P-loop containing nucleoside triphosphate hydrolases"/>
    <property type="match status" value="1"/>
</dbReference>
<dbReference type="SUPFAM" id="SSF47895">
    <property type="entry name" value="Transducin (alpha subunit), insertion domain"/>
    <property type="match status" value="1"/>
</dbReference>
<dbReference type="PROSITE" id="PS51882">
    <property type="entry name" value="G_ALPHA"/>
    <property type="match status" value="1"/>
</dbReference>
<organism>
    <name type="scientific">Cochliobolus heterostrophus (strain C4 / ATCC 48331 / race T)</name>
    <name type="common">Southern corn leaf blight fungus</name>
    <name type="synonym">Bipolaris maydis</name>
    <dbReference type="NCBI Taxonomy" id="665024"/>
    <lineage>
        <taxon>Eukaryota</taxon>
        <taxon>Fungi</taxon>
        <taxon>Dikarya</taxon>
        <taxon>Ascomycota</taxon>
        <taxon>Pezizomycotina</taxon>
        <taxon>Dothideomycetes</taxon>
        <taxon>Pleosporomycetidae</taxon>
        <taxon>Pleosporales</taxon>
        <taxon>Pleosporineae</taxon>
        <taxon>Pleosporaceae</taxon>
        <taxon>Bipolaris</taxon>
    </lineage>
</organism>
<protein>
    <recommendedName>
        <fullName>Guanine nucleotide-binding protein subunit alpha</fullName>
    </recommendedName>
</protein>
<accession>O74227</accession>
<accession>N4XDY1</accession>
<name>GPA1_COCH4</name>
<evidence type="ECO:0000250" key="1"/>
<evidence type="ECO:0000250" key="2">
    <source>
        <dbReference type="UniProtKB" id="P08539"/>
    </source>
</evidence>
<evidence type="ECO:0000250" key="3">
    <source>
        <dbReference type="UniProtKB" id="P18064"/>
    </source>
</evidence>
<evidence type="ECO:0000255" key="4">
    <source>
        <dbReference type="PROSITE-ProRule" id="PRU01230"/>
    </source>
</evidence>
<evidence type="ECO:0000305" key="5"/>
<gene>
    <name type="primary">CGA1</name>
    <name type="ORF">COCC4DRAFT_143328</name>
</gene>
<reference key="1">
    <citation type="journal article" date="1999" name="Fungal Genet. Biol.">
        <title>A G protein alpha subunit from Cochliobolus heterostrophus involved in mating and appressorium formation.</title>
        <authorList>
            <person name="Horwitz B.A."/>
            <person name="Sharon A."/>
            <person name="Lu S.W."/>
            <person name="Ritter V."/>
            <person name="Sandrock T.M."/>
            <person name="Yoder O.C."/>
            <person name="Turgeon B.G."/>
        </authorList>
    </citation>
    <scope>NUCLEOTIDE SEQUENCE [GENOMIC DNA]</scope>
    <source>
        <strain>C4 / ATCC 48331 / race T</strain>
    </source>
</reference>
<reference key="2">
    <citation type="journal article" date="2012" name="PLoS Pathog.">
        <title>Diverse lifestyles and strategies of plant pathogenesis encoded in the genomes of eighteen Dothideomycetes fungi.</title>
        <authorList>
            <person name="Ohm R.A."/>
            <person name="Feau N."/>
            <person name="Henrissat B."/>
            <person name="Schoch C.L."/>
            <person name="Horwitz B.A."/>
            <person name="Barry K.W."/>
            <person name="Condon B.J."/>
            <person name="Copeland A.C."/>
            <person name="Dhillon B."/>
            <person name="Glaser F."/>
            <person name="Hesse C.N."/>
            <person name="Kosti I."/>
            <person name="LaButti K."/>
            <person name="Lindquist E.A."/>
            <person name="Lucas S."/>
            <person name="Salamov A.A."/>
            <person name="Bradshaw R.E."/>
            <person name="Ciuffetti L."/>
            <person name="Hamelin R.C."/>
            <person name="Kema G.H.J."/>
            <person name="Lawrence C."/>
            <person name="Scott J.A."/>
            <person name="Spatafora J.W."/>
            <person name="Turgeon B.G."/>
            <person name="de Wit P.J.G.M."/>
            <person name="Zhong S."/>
            <person name="Goodwin S.B."/>
            <person name="Grigoriev I.V."/>
        </authorList>
    </citation>
    <scope>NUCLEOTIDE SEQUENCE [LARGE SCALE GENOMIC DNA]</scope>
    <source>
        <strain>C4 / ATCC 48331 / race T</strain>
    </source>
</reference>
<reference key="3">
    <citation type="journal article" date="2013" name="PLoS Genet.">
        <title>Comparative genome structure, secondary metabolite, and effector coding capacity across Cochliobolus pathogens.</title>
        <authorList>
            <person name="Condon B.J."/>
            <person name="Leng Y."/>
            <person name="Wu D."/>
            <person name="Bushley K.E."/>
            <person name="Ohm R.A."/>
            <person name="Otillar R."/>
            <person name="Martin J."/>
            <person name="Schackwitz W."/>
            <person name="Grimwood J."/>
            <person name="MohdZainudin N."/>
            <person name="Xue C."/>
            <person name="Wang R."/>
            <person name="Manning V.A."/>
            <person name="Dhillon B."/>
            <person name="Tu Z.J."/>
            <person name="Steffenson B.J."/>
            <person name="Salamov A."/>
            <person name="Sun H."/>
            <person name="Lowry S."/>
            <person name="LaButti K."/>
            <person name="Han J."/>
            <person name="Copeland A."/>
            <person name="Lindquist E."/>
            <person name="Barry K."/>
            <person name="Schmutz J."/>
            <person name="Baker S.E."/>
            <person name="Ciuffetti L.M."/>
            <person name="Grigoriev I.V."/>
            <person name="Zhong S."/>
            <person name="Turgeon B.G."/>
        </authorList>
    </citation>
    <scope>NUCLEOTIDE SEQUENCE [LARGE SCALE GENOMIC DNA]</scope>
    <source>
        <strain>C4 / ATCC 48331 / race T</strain>
    </source>
</reference>